<name>LEPA_SPHAL</name>
<evidence type="ECO:0000255" key="1">
    <source>
        <dbReference type="HAMAP-Rule" id="MF_00071"/>
    </source>
</evidence>
<gene>
    <name evidence="1" type="primary">lepA</name>
    <name type="ordered locus">Sala_2036</name>
</gene>
<keyword id="KW-0997">Cell inner membrane</keyword>
<keyword id="KW-1003">Cell membrane</keyword>
<keyword id="KW-0342">GTP-binding</keyword>
<keyword id="KW-0378">Hydrolase</keyword>
<keyword id="KW-0472">Membrane</keyword>
<keyword id="KW-0547">Nucleotide-binding</keyword>
<keyword id="KW-0648">Protein biosynthesis</keyword>
<keyword id="KW-1185">Reference proteome</keyword>
<proteinExistence type="inferred from homology"/>
<organism>
    <name type="scientific">Sphingopyxis alaskensis (strain DSM 13593 / LMG 18877 / RB2256)</name>
    <name type="common">Sphingomonas alaskensis</name>
    <dbReference type="NCBI Taxonomy" id="317655"/>
    <lineage>
        <taxon>Bacteria</taxon>
        <taxon>Pseudomonadati</taxon>
        <taxon>Pseudomonadota</taxon>
        <taxon>Alphaproteobacteria</taxon>
        <taxon>Sphingomonadales</taxon>
        <taxon>Sphingomonadaceae</taxon>
        <taxon>Sphingopyxis</taxon>
    </lineage>
</organism>
<accession>Q1GRH5</accession>
<sequence length="607" mass="67044">MTTPLSRIRNFSIIAHIDHGKSTLADRLIQFTGGLTEREMSAQVLDNMDIEKERGITIKAQTVRLSYTAKDGETYQLNLMDTPGHVDFAYEVSRSLAACEGALLVVDAAQGVEAQTLANVYQSIEHDHEIVPVINKIDLPAADVDKVKAEIEDIIGLPADDAVLASAKAGIGIEETLEAIVARIPPPRGDAAAPLVAMLVDSWYDPYLGVVILVRVVDGVLKKGQQIKFMQAGTTHLIDRVGCFTPKRTDLVEIGPGEIGFITAQIKDVAQARVGDTVTDAKKPAAAPLPGFKEVQPVVFCGLFPTDANDFEKLRESIQKLRLNDASFSFEMESSAALGFGFRCGFLGLLHLEIIQERLTREYDLDLITTAPSVVYKLKLSHTKNEAAKEVELHNPADMPDPNRIDEIEEPWIEAVIYVPDEYLGPILKLCQDRRGVQKNLTYVGGRAQITYELPLNEVVFDFYDRLKSISRGYASFDYHQIGHRPGDLVKMSILVNNEPVDALSMIVHRGSAESRGRGMCERLKDLIPRHMFKIPIQAAIGGKVIARETIAALRKDVTAKCYGGDATRKKKLLEKQKEGKKRMREYGNVNIPQEAFIAALRMGDDG</sequence>
<protein>
    <recommendedName>
        <fullName evidence="1">Elongation factor 4</fullName>
        <shortName evidence="1">EF-4</shortName>
        <ecNumber evidence="1">3.6.5.n1</ecNumber>
    </recommendedName>
    <alternativeName>
        <fullName evidence="1">Ribosomal back-translocase LepA</fullName>
    </alternativeName>
</protein>
<reference key="1">
    <citation type="journal article" date="2009" name="Proc. Natl. Acad. Sci. U.S.A.">
        <title>The genomic basis of trophic strategy in marine bacteria.</title>
        <authorList>
            <person name="Lauro F.M."/>
            <person name="McDougald D."/>
            <person name="Thomas T."/>
            <person name="Williams T.J."/>
            <person name="Egan S."/>
            <person name="Rice S."/>
            <person name="DeMaere M.Z."/>
            <person name="Ting L."/>
            <person name="Ertan H."/>
            <person name="Johnson J."/>
            <person name="Ferriera S."/>
            <person name="Lapidus A."/>
            <person name="Anderson I."/>
            <person name="Kyrpides N."/>
            <person name="Munk A.C."/>
            <person name="Detter C."/>
            <person name="Han C.S."/>
            <person name="Brown M.V."/>
            <person name="Robb F.T."/>
            <person name="Kjelleberg S."/>
            <person name="Cavicchioli R."/>
        </authorList>
    </citation>
    <scope>NUCLEOTIDE SEQUENCE [LARGE SCALE GENOMIC DNA]</scope>
    <source>
        <strain>DSM 13593 / LMG 18877 / RB2256</strain>
    </source>
</reference>
<dbReference type="EC" id="3.6.5.n1" evidence="1"/>
<dbReference type="EMBL" id="CP000356">
    <property type="protein sequence ID" value="ABF53747.1"/>
    <property type="molecule type" value="Genomic_DNA"/>
</dbReference>
<dbReference type="RefSeq" id="WP_011542323.1">
    <property type="nucleotide sequence ID" value="NC_008048.1"/>
</dbReference>
<dbReference type="SMR" id="Q1GRH5"/>
<dbReference type="STRING" id="317655.Sala_2036"/>
<dbReference type="KEGG" id="sal:Sala_2036"/>
<dbReference type="eggNOG" id="COG0481">
    <property type="taxonomic scope" value="Bacteria"/>
</dbReference>
<dbReference type="HOGENOM" id="CLU_009995_3_3_5"/>
<dbReference type="OrthoDB" id="9802948at2"/>
<dbReference type="Proteomes" id="UP000006578">
    <property type="component" value="Chromosome"/>
</dbReference>
<dbReference type="GO" id="GO:0005886">
    <property type="term" value="C:plasma membrane"/>
    <property type="evidence" value="ECO:0007669"/>
    <property type="project" value="UniProtKB-SubCell"/>
</dbReference>
<dbReference type="GO" id="GO:0005525">
    <property type="term" value="F:GTP binding"/>
    <property type="evidence" value="ECO:0007669"/>
    <property type="project" value="UniProtKB-UniRule"/>
</dbReference>
<dbReference type="GO" id="GO:0003924">
    <property type="term" value="F:GTPase activity"/>
    <property type="evidence" value="ECO:0007669"/>
    <property type="project" value="UniProtKB-UniRule"/>
</dbReference>
<dbReference type="GO" id="GO:0097216">
    <property type="term" value="F:guanosine tetraphosphate binding"/>
    <property type="evidence" value="ECO:0007669"/>
    <property type="project" value="UniProtKB-ARBA"/>
</dbReference>
<dbReference type="GO" id="GO:0043022">
    <property type="term" value="F:ribosome binding"/>
    <property type="evidence" value="ECO:0007669"/>
    <property type="project" value="UniProtKB-UniRule"/>
</dbReference>
<dbReference type="GO" id="GO:0003746">
    <property type="term" value="F:translation elongation factor activity"/>
    <property type="evidence" value="ECO:0007669"/>
    <property type="project" value="UniProtKB-UniRule"/>
</dbReference>
<dbReference type="GO" id="GO:0045727">
    <property type="term" value="P:positive regulation of translation"/>
    <property type="evidence" value="ECO:0007669"/>
    <property type="project" value="UniProtKB-UniRule"/>
</dbReference>
<dbReference type="CDD" id="cd03699">
    <property type="entry name" value="EF4_II"/>
    <property type="match status" value="1"/>
</dbReference>
<dbReference type="CDD" id="cd16260">
    <property type="entry name" value="EF4_III"/>
    <property type="match status" value="1"/>
</dbReference>
<dbReference type="CDD" id="cd01890">
    <property type="entry name" value="LepA"/>
    <property type="match status" value="1"/>
</dbReference>
<dbReference type="CDD" id="cd03709">
    <property type="entry name" value="lepA_C"/>
    <property type="match status" value="1"/>
</dbReference>
<dbReference type="FunFam" id="3.40.50.300:FF:000078">
    <property type="entry name" value="Elongation factor 4"/>
    <property type="match status" value="1"/>
</dbReference>
<dbReference type="FunFam" id="2.40.30.10:FF:000015">
    <property type="entry name" value="Translation factor GUF1, mitochondrial"/>
    <property type="match status" value="1"/>
</dbReference>
<dbReference type="FunFam" id="3.30.70.240:FF:000007">
    <property type="entry name" value="Translation factor GUF1, mitochondrial"/>
    <property type="match status" value="1"/>
</dbReference>
<dbReference type="FunFam" id="3.30.70.2570:FF:000001">
    <property type="entry name" value="Translation factor GUF1, mitochondrial"/>
    <property type="match status" value="1"/>
</dbReference>
<dbReference type="FunFam" id="3.30.70.870:FF:000004">
    <property type="entry name" value="Translation factor GUF1, mitochondrial"/>
    <property type="match status" value="1"/>
</dbReference>
<dbReference type="Gene3D" id="3.30.70.240">
    <property type="match status" value="1"/>
</dbReference>
<dbReference type="Gene3D" id="3.30.70.2570">
    <property type="entry name" value="Elongation factor 4, C-terminal domain"/>
    <property type="match status" value="1"/>
</dbReference>
<dbReference type="Gene3D" id="3.30.70.870">
    <property type="entry name" value="Elongation Factor G (Translational Gtpase), domain 3"/>
    <property type="match status" value="1"/>
</dbReference>
<dbReference type="Gene3D" id="3.40.50.300">
    <property type="entry name" value="P-loop containing nucleotide triphosphate hydrolases"/>
    <property type="match status" value="1"/>
</dbReference>
<dbReference type="Gene3D" id="2.40.30.10">
    <property type="entry name" value="Translation factors"/>
    <property type="match status" value="1"/>
</dbReference>
<dbReference type="HAMAP" id="MF_00071">
    <property type="entry name" value="LepA"/>
    <property type="match status" value="1"/>
</dbReference>
<dbReference type="InterPro" id="IPR006297">
    <property type="entry name" value="EF-4"/>
</dbReference>
<dbReference type="InterPro" id="IPR041095">
    <property type="entry name" value="EFG_II"/>
</dbReference>
<dbReference type="InterPro" id="IPR035647">
    <property type="entry name" value="EFG_III/V"/>
</dbReference>
<dbReference type="InterPro" id="IPR000640">
    <property type="entry name" value="EFG_V-like"/>
</dbReference>
<dbReference type="InterPro" id="IPR004161">
    <property type="entry name" value="EFTu-like_2"/>
</dbReference>
<dbReference type="InterPro" id="IPR031157">
    <property type="entry name" value="G_TR_CS"/>
</dbReference>
<dbReference type="InterPro" id="IPR038363">
    <property type="entry name" value="LepA_C_sf"/>
</dbReference>
<dbReference type="InterPro" id="IPR013842">
    <property type="entry name" value="LepA_CTD"/>
</dbReference>
<dbReference type="InterPro" id="IPR035654">
    <property type="entry name" value="LepA_IV"/>
</dbReference>
<dbReference type="InterPro" id="IPR027417">
    <property type="entry name" value="P-loop_NTPase"/>
</dbReference>
<dbReference type="InterPro" id="IPR005225">
    <property type="entry name" value="Small_GTP-bd"/>
</dbReference>
<dbReference type="InterPro" id="IPR000795">
    <property type="entry name" value="T_Tr_GTP-bd_dom"/>
</dbReference>
<dbReference type="NCBIfam" id="TIGR01393">
    <property type="entry name" value="lepA"/>
    <property type="match status" value="1"/>
</dbReference>
<dbReference type="NCBIfam" id="TIGR00231">
    <property type="entry name" value="small_GTP"/>
    <property type="match status" value="1"/>
</dbReference>
<dbReference type="PANTHER" id="PTHR43512:SF4">
    <property type="entry name" value="TRANSLATION FACTOR GUF1 HOMOLOG, CHLOROPLASTIC"/>
    <property type="match status" value="1"/>
</dbReference>
<dbReference type="PANTHER" id="PTHR43512">
    <property type="entry name" value="TRANSLATION FACTOR GUF1-RELATED"/>
    <property type="match status" value="1"/>
</dbReference>
<dbReference type="Pfam" id="PF00679">
    <property type="entry name" value="EFG_C"/>
    <property type="match status" value="1"/>
</dbReference>
<dbReference type="Pfam" id="PF14492">
    <property type="entry name" value="EFG_III"/>
    <property type="match status" value="1"/>
</dbReference>
<dbReference type="Pfam" id="PF00009">
    <property type="entry name" value="GTP_EFTU"/>
    <property type="match status" value="1"/>
</dbReference>
<dbReference type="Pfam" id="PF03144">
    <property type="entry name" value="GTP_EFTU_D2"/>
    <property type="match status" value="1"/>
</dbReference>
<dbReference type="Pfam" id="PF06421">
    <property type="entry name" value="LepA_C"/>
    <property type="match status" value="1"/>
</dbReference>
<dbReference type="PRINTS" id="PR00315">
    <property type="entry name" value="ELONGATNFCT"/>
</dbReference>
<dbReference type="SUPFAM" id="SSF54980">
    <property type="entry name" value="EF-G C-terminal domain-like"/>
    <property type="match status" value="2"/>
</dbReference>
<dbReference type="SUPFAM" id="SSF52540">
    <property type="entry name" value="P-loop containing nucleoside triphosphate hydrolases"/>
    <property type="match status" value="1"/>
</dbReference>
<dbReference type="PROSITE" id="PS00301">
    <property type="entry name" value="G_TR_1"/>
    <property type="match status" value="1"/>
</dbReference>
<dbReference type="PROSITE" id="PS51722">
    <property type="entry name" value="G_TR_2"/>
    <property type="match status" value="1"/>
</dbReference>
<feature type="chain" id="PRO_0000265706" description="Elongation factor 4">
    <location>
        <begin position="1"/>
        <end position="607"/>
    </location>
</feature>
<feature type="domain" description="tr-type G">
    <location>
        <begin position="6"/>
        <end position="188"/>
    </location>
</feature>
<feature type="binding site" evidence="1">
    <location>
        <begin position="18"/>
        <end position="23"/>
    </location>
    <ligand>
        <name>GTP</name>
        <dbReference type="ChEBI" id="CHEBI:37565"/>
    </ligand>
</feature>
<feature type="binding site" evidence="1">
    <location>
        <begin position="135"/>
        <end position="138"/>
    </location>
    <ligand>
        <name>GTP</name>
        <dbReference type="ChEBI" id="CHEBI:37565"/>
    </ligand>
</feature>
<comment type="function">
    <text evidence="1">Required for accurate and efficient protein synthesis under certain stress conditions. May act as a fidelity factor of the translation reaction, by catalyzing a one-codon backward translocation of tRNAs on improperly translocated ribosomes. Back-translocation proceeds from a post-translocation (POST) complex to a pre-translocation (PRE) complex, thus giving elongation factor G a second chance to translocate the tRNAs correctly. Binds to ribosomes in a GTP-dependent manner.</text>
</comment>
<comment type="catalytic activity">
    <reaction evidence="1">
        <text>GTP + H2O = GDP + phosphate + H(+)</text>
        <dbReference type="Rhea" id="RHEA:19669"/>
        <dbReference type="ChEBI" id="CHEBI:15377"/>
        <dbReference type="ChEBI" id="CHEBI:15378"/>
        <dbReference type="ChEBI" id="CHEBI:37565"/>
        <dbReference type="ChEBI" id="CHEBI:43474"/>
        <dbReference type="ChEBI" id="CHEBI:58189"/>
        <dbReference type="EC" id="3.6.5.n1"/>
    </reaction>
</comment>
<comment type="subcellular location">
    <subcellularLocation>
        <location evidence="1">Cell inner membrane</location>
        <topology evidence="1">Peripheral membrane protein</topology>
        <orientation evidence="1">Cytoplasmic side</orientation>
    </subcellularLocation>
</comment>
<comment type="similarity">
    <text evidence="1">Belongs to the TRAFAC class translation factor GTPase superfamily. Classic translation factor GTPase family. LepA subfamily.</text>
</comment>